<dbReference type="EMBL" id="L26913">
    <property type="protein sequence ID" value="AAA16478.1"/>
    <property type="molecule type" value="mRNA"/>
</dbReference>
<dbReference type="PIR" id="I52290">
    <property type="entry name" value="I52290"/>
</dbReference>
<dbReference type="RefSeq" id="NP_446280.1">
    <property type="nucleotide sequence ID" value="NM_053828.1"/>
</dbReference>
<dbReference type="SMR" id="P42203"/>
<dbReference type="FunCoup" id="P42203">
    <property type="interactions" value="4"/>
</dbReference>
<dbReference type="STRING" id="10116.ENSRNOP00000010121"/>
<dbReference type="GlyCosmos" id="P42203">
    <property type="glycosylation" value="4 sites, No reported glycans"/>
</dbReference>
<dbReference type="GlyGen" id="P42203">
    <property type="glycosylation" value="5 sites"/>
</dbReference>
<dbReference type="PaxDb" id="10116-ENSRNOP00000010121"/>
<dbReference type="Ensembl" id="ENSRNOT00000010121.3">
    <property type="protein sequence ID" value="ENSRNOP00000010121.1"/>
    <property type="gene ID" value="ENSRNOG00000007652.3"/>
</dbReference>
<dbReference type="GeneID" id="116553"/>
<dbReference type="KEGG" id="rno:116553"/>
<dbReference type="UCSC" id="RGD:68949">
    <property type="organism name" value="rat"/>
</dbReference>
<dbReference type="AGR" id="RGD:68949"/>
<dbReference type="CTD" id="3596"/>
<dbReference type="RGD" id="68949">
    <property type="gene designation" value="Il13"/>
</dbReference>
<dbReference type="eggNOG" id="ENOG502SZKX">
    <property type="taxonomic scope" value="Eukaryota"/>
</dbReference>
<dbReference type="GeneTree" id="ENSGT00390000003225"/>
<dbReference type="HOGENOM" id="CLU_158063_0_0_1"/>
<dbReference type="InParanoid" id="P42203"/>
<dbReference type="OMA" id="KTPLCNG"/>
<dbReference type="OrthoDB" id="9447464at2759"/>
<dbReference type="PhylomeDB" id="P42203"/>
<dbReference type="TreeFam" id="TF336383"/>
<dbReference type="Reactome" id="R-RNO-6785807">
    <property type="pathway name" value="Interleukin-4 and Interleukin-13 signaling"/>
</dbReference>
<dbReference type="PRO" id="PR:P42203"/>
<dbReference type="Proteomes" id="UP000002494">
    <property type="component" value="Chromosome 10"/>
</dbReference>
<dbReference type="Bgee" id="ENSRNOG00000007652">
    <property type="expression patterns" value="Expressed in thymus and 5 other cell types or tissues"/>
</dbReference>
<dbReference type="GO" id="GO:0005737">
    <property type="term" value="C:cytoplasm"/>
    <property type="evidence" value="ECO:0000266"/>
    <property type="project" value="RGD"/>
</dbReference>
<dbReference type="GO" id="GO:0009897">
    <property type="term" value="C:external side of plasma membrane"/>
    <property type="evidence" value="ECO:0000266"/>
    <property type="project" value="RGD"/>
</dbReference>
<dbReference type="GO" id="GO:0005576">
    <property type="term" value="C:extracellular region"/>
    <property type="evidence" value="ECO:0000266"/>
    <property type="project" value="RGD"/>
</dbReference>
<dbReference type="GO" id="GO:0005615">
    <property type="term" value="C:extracellular space"/>
    <property type="evidence" value="ECO:0000314"/>
    <property type="project" value="RGD"/>
</dbReference>
<dbReference type="GO" id="GO:0005125">
    <property type="term" value="F:cytokine activity"/>
    <property type="evidence" value="ECO:0000266"/>
    <property type="project" value="RGD"/>
</dbReference>
<dbReference type="GO" id="GO:0005144">
    <property type="term" value="F:interleukin-13 receptor binding"/>
    <property type="evidence" value="ECO:0000353"/>
    <property type="project" value="RGD"/>
</dbReference>
<dbReference type="GO" id="GO:0071345">
    <property type="term" value="P:cellular response to cytokine stimulus"/>
    <property type="evidence" value="ECO:0000266"/>
    <property type="project" value="RGD"/>
</dbReference>
<dbReference type="GO" id="GO:0071260">
    <property type="term" value="P:cellular response to mechanical stimulus"/>
    <property type="evidence" value="ECO:0000270"/>
    <property type="project" value="RGD"/>
</dbReference>
<dbReference type="GO" id="GO:0006955">
    <property type="term" value="P:immune response"/>
    <property type="evidence" value="ECO:0007669"/>
    <property type="project" value="InterPro"/>
</dbReference>
<dbReference type="GO" id="GO:0006954">
    <property type="term" value="P:inflammatory response"/>
    <property type="evidence" value="ECO:0000266"/>
    <property type="project" value="RGD"/>
</dbReference>
<dbReference type="GO" id="GO:0035772">
    <property type="term" value="P:interleukin-13-mediated signaling pathway"/>
    <property type="evidence" value="ECO:0000266"/>
    <property type="project" value="RGD"/>
</dbReference>
<dbReference type="GO" id="GO:0042116">
    <property type="term" value="P:macrophage activation"/>
    <property type="evidence" value="ECO:0000266"/>
    <property type="project" value="RGD"/>
</dbReference>
<dbReference type="GO" id="GO:0001774">
    <property type="term" value="P:microglial cell activation"/>
    <property type="evidence" value="ECO:0000315"/>
    <property type="project" value="RGD"/>
</dbReference>
<dbReference type="GO" id="GO:1903660">
    <property type="term" value="P:negative regulation of complement-dependent cytotoxicity"/>
    <property type="evidence" value="ECO:0000266"/>
    <property type="project" value="RGD"/>
</dbReference>
<dbReference type="GO" id="GO:2000352">
    <property type="term" value="P:negative regulation of endothelial cell apoptotic process"/>
    <property type="evidence" value="ECO:0000266"/>
    <property type="project" value="RGD"/>
</dbReference>
<dbReference type="GO" id="GO:0050728">
    <property type="term" value="P:negative regulation of inflammatory response"/>
    <property type="evidence" value="ECO:0000266"/>
    <property type="project" value="RGD"/>
</dbReference>
<dbReference type="GO" id="GO:0071635">
    <property type="term" value="P:negative regulation of transforming growth factor beta production"/>
    <property type="evidence" value="ECO:0000314"/>
    <property type="project" value="RGD"/>
</dbReference>
<dbReference type="GO" id="GO:0030890">
    <property type="term" value="P:positive regulation of B cell proliferation"/>
    <property type="evidence" value="ECO:0000314"/>
    <property type="project" value="RGD"/>
</dbReference>
<dbReference type="GO" id="GO:0120162">
    <property type="term" value="P:positive regulation of cold-induced thermogenesis"/>
    <property type="evidence" value="ECO:0000250"/>
    <property type="project" value="YuBioLab"/>
</dbReference>
<dbReference type="GO" id="GO:0010628">
    <property type="term" value="P:positive regulation of gene expression"/>
    <property type="evidence" value="ECO:0000314"/>
    <property type="project" value="ARUK-UCL"/>
</dbReference>
<dbReference type="GO" id="GO:0002639">
    <property type="term" value="P:positive regulation of immunoglobulin production"/>
    <property type="evidence" value="ECO:0000314"/>
    <property type="project" value="RGD"/>
</dbReference>
<dbReference type="GO" id="GO:0032733">
    <property type="term" value="P:positive regulation of interleukin-10 production"/>
    <property type="evidence" value="ECO:0000266"/>
    <property type="project" value="RGD"/>
</dbReference>
<dbReference type="GO" id="GO:0043032">
    <property type="term" value="P:positive regulation of macrophage activation"/>
    <property type="evidence" value="ECO:0000266"/>
    <property type="project" value="RGD"/>
</dbReference>
<dbReference type="GO" id="GO:0043306">
    <property type="term" value="P:positive regulation of mast cell degranulation"/>
    <property type="evidence" value="ECO:0000266"/>
    <property type="project" value="RGD"/>
</dbReference>
<dbReference type="GO" id="GO:0043270">
    <property type="term" value="P:positive regulation of monoatomic ion transport"/>
    <property type="evidence" value="ECO:0000314"/>
    <property type="project" value="RGD"/>
</dbReference>
<dbReference type="GO" id="GO:2000231">
    <property type="term" value="P:positive regulation of pancreatic stellate cell proliferation"/>
    <property type="evidence" value="ECO:0000314"/>
    <property type="project" value="RGD"/>
</dbReference>
<dbReference type="GO" id="GO:0050714">
    <property type="term" value="P:positive regulation of protein secretion"/>
    <property type="evidence" value="ECO:0000314"/>
    <property type="project" value="RGD"/>
</dbReference>
<dbReference type="GO" id="GO:0051281">
    <property type="term" value="P:positive regulation of release of sequestered calcium ion into cytosol"/>
    <property type="evidence" value="ECO:0000314"/>
    <property type="project" value="RGD"/>
</dbReference>
<dbReference type="GO" id="GO:0048661">
    <property type="term" value="P:positive regulation of smooth muscle cell proliferation"/>
    <property type="evidence" value="ECO:0000314"/>
    <property type="project" value="RGD"/>
</dbReference>
<dbReference type="GO" id="GO:0045944">
    <property type="term" value="P:positive regulation of transcription by RNA polymerase II"/>
    <property type="evidence" value="ECO:0000266"/>
    <property type="project" value="RGD"/>
</dbReference>
<dbReference type="GO" id="GO:0010155">
    <property type="term" value="P:regulation of proton transport"/>
    <property type="evidence" value="ECO:0000314"/>
    <property type="project" value="RGD"/>
</dbReference>
<dbReference type="GO" id="GO:0045471">
    <property type="term" value="P:response to ethanol"/>
    <property type="evidence" value="ECO:0000270"/>
    <property type="project" value="RGD"/>
</dbReference>
<dbReference type="GO" id="GO:0032496">
    <property type="term" value="P:response to lipopolysaccharide"/>
    <property type="evidence" value="ECO:0000270"/>
    <property type="project" value="RGD"/>
</dbReference>
<dbReference type="GO" id="GO:0009612">
    <property type="term" value="P:response to mechanical stimulus"/>
    <property type="evidence" value="ECO:0000270"/>
    <property type="project" value="RGD"/>
</dbReference>
<dbReference type="GO" id="GO:0009624">
    <property type="term" value="P:response to nematode"/>
    <property type="evidence" value="ECO:0000266"/>
    <property type="project" value="RGD"/>
</dbReference>
<dbReference type="GO" id="GO:0035094">
    <property type="term" value="P:response to nicotine"/>
    <property type="evidence" value="ECO:0000314"/>
    <property type="project" value="RGD"/>
</dbReference>
<dbReference type="GO" id="GO:0010269">
    <property type="term" value="P:response to selenium ion"/>
    <property type="evidence" value="ECO:0000266"/>
    <property type="project" value="RGD"/>
</dbReference>
<dbReference type="FunFam" id="1.20.1250.10:FF:000029">
    <property type="entry name" value="Interleukin-13"/>
    <property type="match status" value="1"/>
</dbReference>
<dbReference type="Gene3D" id="1.20.1250.10">
    <property type="match status" value="1"/>
</dbReference>
<dbReference type="InterPro" id="IPR009079">
    <property type="entry name" value="4_helix_cytokine-like_core"/>
</dbReference>
<dbReference type="InterPro" id="IPR020470">
    <property type="entry name" value="IL-13"/>
</dbReference>
<dbReference type="InterPro" id="IPR001325">
    <property type="entry name" value="IL-4/IL-13"/>
</dbReference>
<dbReference type="InterPro" id="IPR018096">
    <property type="entry name" value="IL-4/IL-13_CS"/>
</dbReference>
<dbReference type="PANTHER" id="PTHR48486">
    <property type="entry name" value="INTERLEUKIN-13"/>
    <property type="match status" value="1"/>
</dbReference>
<dbReference type="PANTHER" id="PTHR48486:SF1">
    <property type="entry name" value="INTERLEUKIN-13"/>
    <property type="match status" value="1"/>
</dbReference>
<dbReference type="Pfam" id="PF03487">
    <property type="entry name" value="IL13"/>
    <property type="match status" value="1"/>
</dbReference>
<dbReference type="PRINTS" id="PR01929">
    <property type="entry name" value="INTRLEUKIN13"/>
</dbReference>
<dbReference type="SMART" id="SM00190">
    <property type="entry name" value="IL4_13"/>
    <property type="match status" value="1"/>
</dbReference>
<dbReference type="SUPFAM" id="SSF47266">
    <property type="entry name" value="4-helical cytokines"/>
    <property type="match status" value="1"/>
</dbReference>
<dbReference type="PROSITE" id="PS00838">
    <property type="entry name" value="INTERLEUKIN_4_13"/>
    <property type="match status" value="1"/>
</dbReference>
<gene>
    <name type="primary">Il13</name>
    <name type="synonym">Il-13</name>
</gene>
<keyword id="KW-0202">Cytokine</keyword>
<keyword id="KW-1015">Disulfide bond</keyword>
<keyword id="KW-0325">Glycoprotein</keyword>
<keyword id="KW-1185">Reference proteome</keyword>
<keyword id="KW-0964">Secreted</keyword>
<keyword id="KW-0732">Signal</keyword>
<reference key="1">
    <citation type="journal article" date="1993" name="Biochem. Biophys. Res. Commun.">
        <title>Cloning of rat interleukin-13 (IL-13) cDNA and analysis of IL-13 gene expression in experimental glomerulonephritis.</title>
        <authorList>
            <person name="Lakkis F.G."/>
            <person name="Cruet E.N."/>
        </authorList>
    </citation>
    <scope>NUCLEOTIDE SEQUENCE [MRNA]</scope>
    <source>
        <strain>Sprague-Dawley</strain>
        <tissue>Kidney cortex</tissue>
    </source>
</reference>
<reference key="2">
    <citation type="journal article" date="1997" name="J. Clin. Invest.">
        <title>In vivo suppression of NF-kappa B and preservation of I kappa B alpha by interleukin-10 and interleukin-13.</title>
        <authorList>
            <person name="Lentsch A.B."/>
            <person name="Shanley T.P."/>
            <person name="Sarma V."/>
            <person name="Ward P.A."/>
        </authorList>
    </citation>
    <scope>FUNCTION</scope>
</reference>
<evidence type="ECO:0000250" key="1"/>
<evidence type="ECO:0000250" key="2">
    <source>
        <dbReference type="UniProtKB" id="P20109"/>
    </source>
</evidence>
<evidence type="ECO:0000250" key="3">
    <source>
        <dbReference type="UniProtKB" id="P35225"/>
    </source>
</evidence>
<evidence type="ECO:0000255" key="4"/>
<evidence type="ECO:0000269" key="5">
    <source>
    </source>
</evidence>
<evidence type="ECO:0000305" key="6"/>
<accession>P42203</accession>
<proteinExistence type="evidence at transcript level"/>
<name>IL13_RAT</name>
<feature type="signal peptide" evidence="4">
    <location>
        <begin position="1"/>
        <end position="18"/>
    </location>
</feature>
<feature type="chain" id="PRO_0000015553" description="Interleukin-13">
    <location>
        <begin position="19"/>
        <end position="131"/>
    </location>
</feature>
<feature type="glycosylation site" description="N-linked (GlcNAc...) asparagine" evidence="4">
    <location>
        <position position="42"/>
    </location>
</feature>
<feature type="glycosylation site" description="N-linked (GlcNAc...) asparagine" evidence="4">
    <location>
        <position position="53"/>
    </location>
</feature>
<feature type="glycosylation site" description="N-linked (GlcNAc...) asparagine" evidence="4">
    <location>
        <position position="76"/>
    </location>
</feature>
<feature type="glycosylation site" description="N-linked (GlcNAc...) asparagine" evidence="4">
    <location>
        <position position="121"/>
    </location>
</feature>
<feature type="disulfide bond" evidence="3">
    <location>
        <begin position="52"/>
        <end position="80"/>
    </location>
</feature>
<feature type="disulfide bond" evidence="3">
    <location>
        <begin position="68"/>
        <end position="94"/>
    </location>
</feature>
<organism>
    <name type="scientific">Rattus norvegicus</name>
    <name type="common">Rat</name>
    <dbReference type="NCBI Taxonomy" id="10116"/>
    <lineage>
        <taxon>Eukaryota</taxon>
        <taxon>Metazoa</taxon>
        <taxon>Chordata</taxon>
        <taxon>Craniata</taxon>
        <taxon>Vertebrata</taxon>
        <taxon>Euteleostomi</taxon>
        <taxon>Mammalia</taxon>
        <taxon>Eutheria</taxon>
        <taxon>Euarchontoglires</taxon>
        <taxon>Glires</taxon>
        <taxon>Rodentia</taxon>
        <taxon>Myomorpha</taxon>
        <taxon>Muroidea</taxon>
        <taxon>Muridae</taxon>
        <taxon>Murinae</taxon>
        <taxon>Rattus</taxon>
    </lineage>
</organism>
<comment type="function">
    <text evidence="2 3 5">Cytokine that plays important roles in allergic inflammation and immune response to parasite infection (PubMed:9366558). Synergizes with IL2 in regulating interferon-gamma synthesis. Stimulates B-cell proliferation, and activation of eosinophils, basophils, and mast cells (By similarity). Plays an important role in controlling IL33 activity by modulating the production of transmembrane and soluble forms of interleukin-1 receptor-like 1/IL1RL1 (By similarity). Displays the capacity to antagonize Th1-driven proinflammatory immune response and downregulates synthesis of many proinflammatory cytokines including IL1, IL6, IL10, IL12 and TNF-alpha through a mechanism that partially involves suppression of NF-kappa-B (PubMed:9366558). Also functions on nonhematopoietic cells, including endothelial cells where it induces vascular cell adhesion protein 1/VCAM1, which is important in the recruitment of eosinophils. Exerts its biological effects through its receptors which comprises the IL4R chain and the IL13RA1 chain, to activate JAK1 and TYK2, leading to the activation of STAT6. Aside from IL13RA1, another receptor IL13RA2 acts as a high affinity decoy for IL13 and mediates internalization and depletion of extracellular IL13 (By similarity).</text>
</comment>
<comment type="subunit">
    <text evidence="1">Interacts with IL13RA2.</text>
</comment>
<comment type="subcellular location">
    <subcellularLocation>
        <location>Secreted</location>
    </subcellularLocation>
</comment>
<comment type="similarity">
    <text evidence="6">Belongs to the IL-4/IL-13 family.</text>
</comment>
<protein>
    <recommendedName>
        <fullName>Interleukin-13</fullName>
        <shortName>IL-13</shortName>
    </recommendedName>
    <alternativeName>
        <fullName>T-cell activation protein P600</fullName>
    </alternativeName>
</protein>
<sequence length="131" mass="14093">MALWVTAVLALACLGGLATPGPVRRSTSPPVALRELIEELSNITQDQKTSLCNSSMVWSVDLTAGGFCAALESLTNISSCNAIHRTQRILNGLCNQKASDVASSPPDTKIEVAQFISKLLNYSKQLFRYGH</sequence>